<gene>
    <name type="ordered locus">AF_0096</name>
</gene>
<keyword id="KW-1185">Reference proteome</keyword>
<dbReference type="EMBL" id="AE000782">
    <property type="protein sequence ID" value="AAB91144.1"/>
    <property type="molecule type" value="Genomic_DNA"/>
</dbReference>
<dbReference type="PIR" id="H69261">
    <property type="entry name" value="H69261"/>
</dbReference>
<dbReference type="SMR" id="O30140"/>
<dbReference type="STRING" id="224325.AF_0096"/>
<dbReference type="PaxDb" id="224325-AF_0096"/>
<dbReference type="EnsemblBacteria" id="AAB91144">
    <property type="protein sequence ID" value="AAB91144"/>
    <property type="gene ID" value="AF_0096"/>
</dbReference>
<dbReference type="KEGG" id="afu:AF_0096"/>
<dbReference type="eggNOG" id="arCOG07521">
    <property type="taxonomic scope" value="Archaea"/>
</dbReference>
<dbReference type="HOGENOM" id="CLU_2044278_0_0_2"/>
<dbReference type="Proteomes" id="UP000002199">
    <property type="component" value="Chromosome"/>
</dbReference>
<organism>
    <name type="scientific">Archaeoglobus fulgidus (strain ATCC 49558 / DSM 4304 / JCM 9628 / NBRC 100126 / VC-16)</name>
    <dbReference type="NCBI Taxonomy" id="224325"/>
    <lineage>
        <taxon>Archaea</taxon>
        <taxon>Methanobacteriati</taxon>
        <taxon>Methanobacteriota</taxon>
        <taxon>Archaeoglobi</taxon>
        <taxon>Archaeoglobales</taxon>
        <taxon>Archaeoglobaceae</taxon>
        <taxon>Archaeoglobus</taxon>
    </lineage>
</organism>
<feature type="chain" id="PRO_0000127828" description="Uncharacterized protein AF_0096">
    <location>
        <begin position="1"/>
        <end position="104"/>
    </location>
</feature>
<protein>
    <recommendedName>
        <fullName>Uncharacterized protein AF_0096</fullName>
    </recommendedName>
</protein>
<sequence length="104" mass="12116">MVFLHIMLATWGLHMSFYVKKLSSPQNYFEITEEDFREIPKLKEIFVDLQKLAPGEERSYELDFSTGNKISEYLTEKQAEVGECGYTYCFKYGDAYYGAHMGTP</sequence>
<name>Y096_ARCFU</name>
<accession>O30140</accession>
<proteinExistence type="predicted"/>
<reference key="1">
    <citation type="journal article" date="1997" name="Nature">
        <title>The complete genome sequence of the hyperthermophilic, sulphate-reducing archaeon Archaeoglobus fulgidus.</title>
        <authorList>
            <person name="Klenk H.-P."/>
            <person name="Clayton R.A."/>
            <person name="Tomb J.-F."/>
            <person name="White O."/>
            <person name="Nelson K.E."/>
            <person name="Ketchum K.A."/>
            <person name="Dodson R.J."/>
            <person name="Gwinn M.L."/>
            <person name="Hickey E.K."/>
            <person name="Peterson J.D."/>
            <person name="Richardson D.L."/>
            <person name="Kerlavage A.R."/>
            <person name="Graham D.E."/>
            <person name="Kyrpides N.C."/>
            <person name="Fleischmann R.D."/>
            <person name="Quackenbush J."/>
            <person name="Lee N.H."/>
            <person name="Sutton G.G."/>
            <person name="Gill S.R."/>
            <person name="Kirkness E.F."/>
            <person name="Dougherty B.A."/>
            <person name="McKenney K."/>
            <person name="Adams M.D."/>
            <person name="Loftus B.J."/>
            <person name="Peterson S.N."/>
            <person name="Reich C.I."/>
            <person name="McNeil L.K."/>
            <person name="Badger J.H."/>
            <person name="Glodek A."/>
            <person name="Zhou L."/>
            <person name="Overbeek R."/>
            <person name="Gocayne J.D."/>
            <person name="Weidman J.F."/>
            <person name="McDonald L.A."/>
            <person name="Utterback T.R."/>
            <person name="Cotton M.D."/>
            <person name="Spriggs T."/>
            <person name="Artiach P."/>
            <person name="Kaine B.P."/>
            <person name="Sykes S.M."/>
            <person name="Sadow P.W."/>
            <person name="D'Andrea K.P."/>
            <person name="Bowman C."/>
            <person name="Fujii C."/>
            <person name="Garland S.A."/>
            <person name="Mason T.M."/>
            <person name="Olsen G.J."/>
            <person name="Fraser C.M."/>
            <person name="Smith H.O."/>
            <person name="Woese C.R."/>
            <person name="Venter J.C."/>
        </authorList>
    </citation>
    <scope>NUCLEOTIDE SEQUENCE [LARGE SCALE GENOMIC DNA]</scope>
    <source>
        <strain>ATCC 49558 / DSM 4304 / JCM 9628 / NBRC 100126 / VC-16</strain>
    </source>
</reference>